<dbReference type="EMBL" id="BC089914">
    <property type="protein sequence ID" value="AAH89914.1"/>
    <property type="molecule type" value="mRNA"/>
</dbReference>
<dbReference type="RefSeq" id="NP_001012165.1">
    <property type="nucleotide sequence ID" value="NM_001012165.1"/>
</dbReference>
<dbReference type="SMR" id="Q5FVL2"/>
<dbReference type="FunCoup" id="Q5FVL2">
    <property type="interactions" value="4377"/>
</dbReference>
<dbReference type="STRING" id="10116.ENSRNOP00000023855"/>
<dbReference type="PhosphoSitePlus" id="Q5FVL2"/>
<dbReference type="jPOST" id="Q5FVL2"/>
<dbReference type="PaxDb" id="10116-ENSRNOP00000023855"/>
<dbReference type="Ensembl" id="ENSRNOT00000023855.5">
    <property type="protein sequence ID" value="ENSRNOP00000023855.2"/>
    <property type="gene ID" value="ENSRNOG00000017654.5"/>
</dbReference>
<dbReference type="Ensembl" id="ENSRNOT00000102818.1">
    <property type="protein sequence ID" value="ENSRNOP00000086027.1"/>
    <property type="gene ID" value="ENSRNOG00000017654.5"/>
</dbReference>
<dbReference type="GeneID" id="361425"/>
<dbReference type="KEGG" id="rno:361425"/>
<dbReference type="UCSC" id="RGD:1311219">
    <property type="organism name" value="rat"/>
</dbReference>
<dbReference type="AGR" id="RGD:1311219"/>
<dbReference type="CTD" id="10328"/>
<dbReference type="RGD" id="1311219">
    <property type="gene designation" value="Emc8"/>
</dbReference>
<dbReference type="eggNOG" id="KOG3289">
    <property type="taxonomic scope" value="Eukaryota"/>
</dbReference>
<dbReference type="GeneTree" id="ENSGT00390000006738"/>
<dbReference type="HOGENOM" id="CLU_087337_0_1_1"/>
<dbReference type="InParanoid" id="Q5FVL2"/>
<dbReference type="OMA" id="QIDSWCK"/>
<dbReference type="OrthoDB" id="194468at2759"/>
<dbReference type="PhylomeDB" id="Q5FVL2"/>
<dbReference type="TreeFam" id="TF313860"/>
<dbReference type="PRO" id="PR:Q5FVL2"/>
<dbReference type="Proteomes" id="UP000002494">
    <property type="component" value="Chromosome 19"/>
</dbReference>
<dbReference type="Bgee" id="ENSRNOG00000017654">
    <property type="expression patterns" value="Expressed in pancreas and 20 other cell types or tissues"/>
</dbReference>
<dbReference type="GO" id="GO:0005737">
    <property type="term" value="C:cytoplasm"/>
    <property type="evidence" value="ECO:0000250"/>
    <property type="project" value="UniProtKB"/>
</dbReference>
<dbReference type="GO" id="GO:0072546">
    <property type="term" value="C:EMC complex"/>
    <property type="evidence" value="ECO:0000250"/>
    <property type="project" value="UniProtKB"/>
</dbReference>
<dbReference type="GO" id="GO:0005794">
    <property type="term" value="C:Golgi apparatus"/>
    <property type="evidence" value="ECO:0007669"/>
    <property type="project" value="Ensembl"/>
</dbReference>
<dbReference type="GO" id="GO:0032977">
    <property type="term" value="F:membrane insertase activity"/>
    <property type="evidence" value="ECO:0007669"/>
    <property type="project" value="Ensembl"/>
</dbReference>
<dbReference type="GO" id="GO:0045050">
    <property type="term" value="P:protein insertion into ER membrane by stop-transfer membrane-anchor sequence"/>
    <property type="evidence" value="ECO:0000250"/>
    <property type="project" value="UniProtKB"/>
</dbReference>
<dbReference type="GO" id="GO:0071816">
    <property type="term" value="P:tail-anchored membrane protein insertion into ER membrane"/>
    <property type="evidence" value="ECO:0000250"/>
    <property type="project" value="UniProtKB"/>
</dbReference>
<dbReference type="CDD" id="cd08060">
    <property type="entry name" value="MPN_UPF0172"/>
    <property type="match status" value="1"/>
</dbReference>
<dbReference type="InterPro" id="IPR005366">
    <property type="entry name" value="EMC8/9"/>
</dbReference>
<dbReference type="InterPro" id="IPR037518">
    <property type="entry name" value="MPN"/>
</dbReference>
<dbReference type="PANTHER" id="PTHR12941">
    <property type="entry name" value="ER MEMBRANE PROTEIN COMPLEX"/>
    <property type="match status" value="1"/>
</dbReference>
<dbReference type="PANTHER" id="PTHR12941:SF13">
    <property type="entry name" value="ER MEMBRANE PROTEIN COMPLEX SUBUNIT 8"/>
    <property type="match status" value="1"/>
</dbReference>
<dbReference type="Pfam" id="PF03665">
    <property type="entry name" value="UPF0172"/>
    <property type="match status" value="1"/>
</dbReference>
<dbReference type="PROSITE" id="PS50249">
    <property type="entry name" value="MPN"/>
    <property type="match status" value="1"/>
</dbReference>
<accession>Q5FVL2</accession>
<proteinExistence type="evidence at transcript level"/>
<reference key="1">
    <citation type="journal article" date="2004" name="Genome Res.">
        <title>The status, quality, and expansion of the NIH full-length cDNA project: the Mammalian Gene Collection (MGC).</title>
        <authorList>
            <consortium name="The MGC Project Team"/>
        </authorList>
    </citation>
    <scope>NUCLEOTIDE SEQUENCE [LARGE SCALE MRNA]</scope>
    <source>
        <tissue>Ovary</tissue>
    </source>
</reference>
<sequence>MPGVKLTTQAYCKMVLHGAKYPHCAVNGLLVAERQRPRKEHPPGAGNHTLFVDCIPLFHGTLALTPMLEVALTLIDSWCKDNSYVIAGYYQANERVKDASPNQVAEKVASRIAEGFSDAALIMVDNAKFTMDCAAPTIHVYEQHENRWRCRDPHHDYCEDWPEAQRISASLLDSRSYETLVDFDNHLDDIRSDWTNPEINKAVLHLC</sequence>
<comment type="function">
    <text evidence="1">Part of the endoplasmic reticulum membrane protein complex (EMC) that enables the energy-independent insertion into endoplasmic reticulum membranes of newly synthesized membrane proteins. Preferentially accommodates proteins with transmembrane domains that are weakly hydrophobic or contain destabilizing features such as charged and aromatic residues. Involved in the cotranslational insertion of multi-pass membrane proteins in which stop-transfer membrane-anchor sequences become ER membrane spanning helices. It is also required for the post-translational insertion of tail-anchored/TA proteins in endoplasmic reticulum membranes. By mediating the proper cotranslational insertion of N-terminal transmembrane domains in an N-exo topology, with translocated N-terminus in the lumen of the ER, controls the topology of multi-pass membrane proteins like the G protein-coupled receptors. By regulating the insertion of various proteins in membranes, it is indirectly involved in many cellular processes.</text>
</comment>
<comment type="subunit">
    <text evidence="1">Component of the ER membrane protein complex (EMC). EMC8 and EMC9 are mutually exclusive subunits of the EMC complex.</text>
</comment>
<comment type="subcellular location">
    <subcellularLocation>
        <location evidence="1">Endoplasmic reticulum membrane</location>
        <topology evidence="1">Peripheral membrane protein</topology>
        <orientation evidence="1">Cytoplasmic side</orientation>
    </subcellularLocation>
</comment>
<comment type="similarity">
    <text evidence="3">Belongs to the EMC8/EMC9 family.</text>
</comment>
<protein>
    <recommendedName>
        <fullName>ER membrane protein complex subunit 8</fullName>
    </recommendedName>
    <alternativeName>
        <fullName>Neighbor of COX4</fullName>
    </alternativeName>
</protein>
<organism>
    <name type="scientific">Rattus norvegicus</name>
    <name type="common">Rat</name>
    <dbReference type="NCBI Taxonomy" id="10116"/>
    <lineage>
        <taxon>Eukaryota</taxon>
        <taxon>Metazoa</taxon>
        <taxon>Chordata</taxon>
        <taxon>Craniata</taxon>
        <taxon>Vertebrata</taxon>
        <taxon>Euteleostomi</taxon>
        <taxon>Mammalia</taxon>
        <taxon>Eutheria</taxon>
        <taxon>Euarchontoglires</taxon>
        <taxon>Glires</taxon>
        <taxon>Rodentia</taxon>
        <taxon>Myomorpha</taxon>
        <taxon>Muroidea</taxon>
        <taxon>Muridae</taxon>
        <taxon>Murinae</taxon>
        <taxon>Rattus</taxon>
    </lineage>
</organism>
<evidence type="ECO:0000250" key="1">
    <source>
        <dbReference type="UniProtKB" id="O43402"/>
    </source>
</evidence>
<evidence type="ECO:0000255" key="2">
    <source>
        <dbReference type="PROSITE-ProRule" id="PRU01182"/>
    </source>
</evidence>
<evidence type="ECO:0000305" key="3"/>
<name>EMC8_RAT</name>
<keyword id="KW-0256">Endoplasmic reticulum</keyword>
<keyword id="KW-0472">Membrane</keyword>
<keyword id="KW-1185">Reference proteome</keyword>
<gene>
    <name type="primary">Emc8</name>
    <name type="synonym">Cox4nb</name>
</gene>
<feature type="chain" id="PRO_0000328440" description="ER membrane protein complex subunit 8">
    <location>
        <begin position="1"/>
        <end position="207"/>
    </location>
</feature>
<feature type="domain" description="MPN" evidence="2">
    <location>
        <begin position="4"/>
        <end position="147"/>
    </location>
</feature>